<organism>
    <name type="scientific">Drosophila melanogaster</name>
    <name type="common">Fruit fly</name>
    <dbReference type="NCBI Taxonomy" id="7227"/>
    <lineage>
        <taxon>Eukaryota</taxon>
        <taxon>Metazoa</taxon>
        <taxon>Ecdysozoa</taxon>
        <taxon>Arthropoda</taxon>
        <taxon>Hexapoda</taxon>
        <taxon>Insecta</taxon>
        <taxon>Pterygota</taxon>
        <taxon>Neoptera</taxon>
        <taxon>Endopterygota</taxon>
        <taxon>Diptera</taxon>
        <taxon>Brachycera</taxon>
        <taxon>Muscomorpha</taxon>
        <taxon>Ephydroidea</taxon>
        <taxon>Drosophilidae</taxon>
        <taxon>Drosophila</taxon>
        <taxon>Sophophora</taxon>
    </lineage>
</organism>
<dbReference type="EMBL" id="X76045">
    <property type="protein sequence ID" value="CAA53630.1"/>
    <property type="molecule type" value="mRNA"/>
</dbReference>
<dbReference type="EMBL" id="AE014297">
    <property type="protein sequence ID" value="AAF56511.1"/>
    <property type="molecule type" value="Genomic_DNA"/>
</dbReference>
<dbReference type="EMBL" id="AE014297">
    <property type="protein sequence ID" value="ACZ95031.1"/>
    <property type="molecule type" value="Genomic_DNA"/>
</dbReference>
<dbReference type="EMBL" id="AY070783">
    <property type="protein sequence ID" value="AAL48405.1"/>
    <property type="molecule type" value="mRNA"/>
</dbReference>
<dbReference type="RefSeq" id="NP_001163737.1">
    <property type="nucleotide sequence ID" value="NM_001170266.1"/>
</dbReference>
<dbReference type="RefSeq" id="NP_476988.1">
    <property type="nucleotide sequence ID" value="NM_057640.3"/>
</dbReference>
<dbReference type="PDB" id="2LMT">
    <property type="method" value="NMR"/>
    <property type="chains" value="A=1-148"/>
</dbReference>
<dbReference type="PDB" id="2LMU">
    <property type="method" value="NMR"/>
    <property type="chains" value="A=1-148"/>
</dbReference>
<dbReference type="PDB" id="2LMV">
    <property type="method" value="NMR"/>
    <property type="chains" value="A=1-148"/>
</dbReference>
<dbReference type="PDBsum" id="2LMT"/>
<dbReference type="PDBsum" id="2LMU"/>
<dbReference type="PDBsum" id="2LMV"/>
<dbReference type="BMRB" id="P49258"/>
<dbReference type="SMR" id="P49258"/>
<dbReference type="BioGRID" id="69379">
    <property type="interactions" value="30"/>
</dbReference>
<dbReference type="DIP" id="DIP-19348N"/>
<dbReference type="FunCoup" id="P49258">
    <property type="interactions" value="78"/>
</dbReference>
<dbReference type="IntAct" id="P49258">
    <property type="interactions" value="12"/>
</dbReference>
<dbReference type="STRING" id="7227.FBpp0291175"/>
<dbReference type="PaxDb" id="7227-FBpp0291175"/>
<dbReference type="DNASU" id="44913"/>
<dbReference type="EnsemblMetazoa" id="FBtr0084904">
    <property type="protein sequence ID" value="FBpp0084278"/>
    <property type="gene ID" value="FBgn0011273"/>
</dbReference>
<dbReference type="EnsemblMetazoa" id="FBtr0301963">
    <property type="protein sequence ID" value="FBpp0291175"/>
    <property type="gene ID" value="FBgn0011273"/>
</dbReference>
<dbReference type="GeneID" id="44913"/>
<dbReference type="KEGG" id="dme:Dmel_CG17769"/>
<dbReference type="AGR" id="FB:FBgn0011273"/>
<dbReference type="CTD" id="44913"/>
<dbReference type="FlyBase" id="FBgn0011273">
    <property type="gene designation" value="Acam"/>
</dbReference>
<dbReference type="VEuPathDB" id="VectorBase:FBgn0011273"/>
<dbReference type="eggNOG" id="KOG0027">
    <property type="taxonomic scope" value="Eukaryota"/>
</dbReference>
<dbReference type="GeneTree" id="ENSGT00940000162930"/>
<dbReference type="HOGENOM" id="CLU_061288_2_0_1"/>
<dbReference type="InParanoid" id="P49258"/>
<dbReference type="OMA" id="MMAKQMR"/>
<dbReference type="OrthoDB" id="26525at2759"/>
<dbReference type="PhylomeDB" id="P49258"/>
<dbReference type="BioGRID-ORCS" id="44913">
    <property type="hits" value="0 hits in 1 CRISPR screen"/>
</dbReference>
<dbReference type="EvolutionaryTrace" id="P49258"/>
<dbReference type="GenomeRNAi" id="44913"/>
<dbReference type="PRO" id="PR:P49258"/>
<dbReference type="Proteomes" id="UP000000803">
    <property type="component" value="Chromosome 3R"/>
</dbReference>
<dbReference type="Bgee" id="FBgn0011273">
    <property type="expression patterns" value="Expressed in seminal fluid secreting gland and 4 other cell types or tissues"/>
</dbReference>
<dbReference type="GO" id="GO:0005737">
    <property type="term" value="C:cytoplasm"/>
    <property type="evidence" value="ECO:0000314"/>
    <property type="project" value="FlyBase"/>
</dbReference>
<dbReference type="GO" id="GO:0070865">
    <property type="term" value="C:investment cone"/>
    <property type="evidence" value="ECO:0000314"/>
    <property type="project" value="FlyBase"/>
</dbReference>
<dbReference type="GO" id="GO:0031476">
    <property type="term" value="C:myosin VI complex"/>
    <property type="evidence" value="ECO:0000353"/>
    <property type="project" value="FlyBase"/>
</dbReference>
<dbReference type="GO" id="GO:0005634">
    <property type="term" value="C:nucleus"/>
    <property type="evidence" value="ECO:0000314"/>
    <property type="project" value="FlyBase"/>
</dbReference>
<dbReference type="GO" id="GO:0005509">
    <property type="term" value="F:calcium ion binding"/>
    <property type="evidence" value="ECO:0000250"/>
    <property type="project" value="FlyBase"/>
</dbReference>
<dbReference type="GO" id="GO:0030234">
    <property type="term" value="F:enzyme regulator activity"/>
    <property type="evidence" value="ECO:0000318"/>
    <property type="project" value="GO_Central"/>
</dbReference>
<dbReference type="GO" id="GO:0070855">
    <property type="term" value="F:myosin VI head/neck binding"/>
    <property type="evidence" value="ECO:0000353"/>
    <property type="project" value="FlyBase"/>
</dbReference>
<dbReference type="GO" id="GO:0030048">
    <property type="term" value="P:actin filament-based movement"/>
    <property type="evidence" value="ECO:0000305"/>
    <property type="project" value="FlyBase"/>
</dbReference>
<dbReference type="GO" id="GO:0000226">
    <property type="term" value="P:microtubule cytoskeleton organization"/>
    <property type="evidence" value="ECO:0000318"/>
    <property type="project" value="GO_Central"/>
</dbReference>
<dbReference type="CDD" id="cd00051">
    <property type="entry name" value="EFh"/>
    <property type="match status" value="1"/>
</dbReference>
<dbReference type="FunFam" id="1.10.238.10:FF:000034">
    <property type="entry name" value="Calmodulin"/>
    <property type="match status" value="1"/>
</dbReference>
<dbReference type="FunFam" id="1.10.238.10:FF:000251">
    <property type="entry name" value="Calmodulin-related protein 97A"/>
    <property type="match status" value="1"/>
</dbReference>
<dbReference type="Gene3D" id="1.10.238.10">
    <property type="entry name" value="EF-hand"/>
    <property type="match status" value="3"/>
</dbReference>
<dbReference type="InterPro" id="IPR050230">
    <property type="entry name" value="CALM/Myosin/TropC-like"/>
</dbReference>
<dbReference type="InterPro" id="IPR011992">
    <property type="entry name" value="EF-hand-dom_pair"/>
</dbReference>
<dbReference type="InterPro" id="IPR018247">
    <property type="entry name" value="EF_Hand_1_Ca_BS"/>
</dbReference>
<dbReference type="InterPro" id="IPR002048">
    <property type="entry name" value="EF_hand_dom"/>
</dbReference>
<dbReference type="PANTHER" id="PTHR23048:SF0">
    <property type="entry name" value="CALMODULIN LIKE 3"/>
    <property type="match status" value="1"/>
</dbReference>
<dbReference type="PANTHER" id="PTHR23048">
    <property type="entry name" value="MYOSIN LIGHT CHAIN 1, 3"/>
    <property type="match status" value="1"/>
</dbReference>
<dbReference type="Pfam" id="PF13499">
    <property type="entry name" value="EF-hand_7"/>
    <property type="match status" value="2"/>
</dbReference>
<dbReference type="SMART" id="SM00054">
    <property type="entry name" value="EFh"/>
    <property type="match status" value="4"/>
</dbReference>
<dbReference type="SUPFAM" id="SSF47473">
    <property type="entry name" value="EF-hand"/>
    <property type="match status" value="1"/>
</dbReference>
<dbReference type="PROSITE" id="PS00018">
    <property type="entry name" value="EF_HAND_1"/>
    <property type="match status" value="2"/>
</dbReference>
<dbReference type="PROSITE" id="PS50222">
    <property type="entry name" value="EF_HAND_2"/>
    <property type="match status" value="4"/>
</dbReference>
<evidence type="ECO:0000255" key="1">
    <source>
        <dbReference type="PROSITE-ProRule" id="PRU00448"/>
    </source>
</evidence>
<evidence type="ECO:0000269" key="2">
    <source>
    </source>
</evidence>
<evidence type="ECO:0000305" key="3"/>
<evidence type="ECO:0007829" key="4">
    <source>
        <dbReference type="PDB" id="2LMT"/>
    </source>
</evidence>
<gene>
    <name type="primary">Acam</name>
    <name type="synonym">And</name>
    <name type="synonym">Camr97A</name>
    <name type="ORF">CG17769</name>
</gene>
<keyword id="KW-0002">3D-structure</keyword>
<keyword id="KW-0106">Calcium</keyword>
<keyword id="KW-0479">Metal-binding</keyword>
<keyword id="KW-1185">Reference proteome</keyword>
<keyword id="KW-0677">Repeat</keyword>
<accession>P49258</accession>
<accession>E1JIY2</accession>
<accession>Q9VBL9</accession>
<protein>
    <recommendedName>
        <fullName>Calmodulin-related protein 97A</fullName>
    </recommendedName>
    <alternativeName>
        <fullName>Protein androcam</fullName>
    </alternativeName>
</protein>
<proteinExistence type="evidence at protein level"/>
<feature type="chain" id="PRO_0000073546" description="Calmodulin-related protein 97A">
    <location>
        <begin position="1"/>
        <end position="148"/>
    </location>
</feature>
<feature type="domain" description="EF-hand 1" evidence="1">
    <location>
        <begin position="7"/>
        <end position="42"/>
    </location>
</feature>
<feature type="domain" description="EF-hand 2" evidence="1">
    <location>
        <begin position="43"/>
        <end position="78"/>
    </location>
</feature>
<feature type="domain" description="EF-hand 3" evidence="1">
    <location>
        <begin position="80"/>
        <end position="115"/>
    </location>
</feature>
<feature type="domain" description="EF-hand 4" evidence="1">
    <location>
        <begin position="116"/>
        <end position="148"/>
    </location>
</feature>
<feature type="binding site" evidence="3">
    <location>
        <position position="20"/>
    </location>
    <ligand>
        <name>Ca(2+)</name>
        <dbReference type="ChEBI" id="CHEBI:29108"/>
        <label>1</label>
    </ligand>
</feature>
<feature type="binding site" evidence="3">
    <location>
        <position position="24"/>
    </location>
    <ligand>
        <name>Ca(2+)</name>
        <dbReference type="ChEBI" id="CHEBI:29108"/>
        <label>1</label>
    </ligand>
</feature>
<feature type="binding site" evidence="3">
    <location>
        <position position="26"/>
    </location>
    <ligand>
        <name>Ca(2+)</name>
        <dbReference type="ChEBI" id="CHEBI:29108"/>
        <label>1</label>
    </ligand>
</feature>
<feature type="binding site" evidence="3">
    <location>
        <position position="31"/>
    </location>
    <ligand>
        <name>Ca(2+)</name>
        <dbReference type="ChEBI" id="CHEBI:29108"/>
        <label>1</label>
    </ligand>
</feature>
<feature type="binding site" evidence="3">
    <location>
        <position position="58"/>
    </location>
    <ligand>
        <name>Ca(2+)</name>
        <dbReference type="ChEBI" id="CHEBI:29108"/>
        <label>2</label>
    </ligand>
</feature>
<feature type="binding site" evidence="3">
    <location>
        <position position="60"/>
    </location>
    <ligand>
        <name>Ca(2+)</name>
        <dbReference type="ChEBI" id="CHEBI:29108"/>
        <label>2</label>
    </ligand>
</feature>
<feature type="binding site" evidence="3">
    <location>
        <position position="62"/>
    </location>
    <ligand>
        <name>Ca(2+)</name>
        <dbReference type="ChEBI" id="CHEBI:29108"/>
        <label>2</label>
    </ligand>
</feature>
<feature type="binding site" evidence="3">
    <location>
        <position position="67"/>
    </location>
    <ligand>
        <name>Ca(2+)</name>
        <dbReference type="ChEBI" id="CHEBI:29108"/>
        <label>2</label>
    </ligand>
</feature>
<feature type="binding site" evidence="1">
    <location>
        <position position="93"/>
    </location>
    <ligand>
        <name>Ca(2+)</name>
        <dbReference type="ChEBI" id="CHEBI:29108"/>
        <label>3</label>
    </ligand>
</feature>
<feature type="binding site" evidence="1">
    <location>
        <position position="95"/>
    </location>
    <ligand>
        <name>Ca(2+)</name>
        <dbReference type="ChEBI" id="CHEBI:29108"/>
        <label>3</label>
    </ligand>
</feature>
<feature type="binding site" evidence="1">
    <location>
        <position position="97"/>
    </location>
    <ligand>
        <name>Ca(2+)</name>
        <dbReference type="ChEBI" id="CHEBI:29108"/>
        <label>3</label>
    </ligand>
</feature>
<feature type="binding site" evidence="1">
    <location>
        <position position="104"/>
    </location>
    <ligand>
        <name>Ca(2+)</name>
        <dbReference type="ChEBI" id="CHEBI:29108"/>
        <label>3</label>
    </ligand>
</feature>
<feature type="binding site" evidence="1">
    <location>
        <position position="129"/>
    </location>
    <ligand>
        <name>Ca(2+)</name>
        <dbReference type="ChEBI" id="CHEBI:29108"/>
        <label>4</label>
    </ligand>
</feature>
<feature type="binding site" evidence="1">
    <location>
        <position position="131"/>
    </location>
    <ligand>
        <name>Ca(2+)</name>
        <dbReference type="ChEBI" id="CHEBI:29108"/>
        <label>4</label>
    </ligand>
</feature>
<feature type="binding site" evidence="1">
    <location>
        <position position="133"/>
    </location>
    <ligand>
        <name>Ca(2+)</name>
        <dbReference type="ChEBI" id="CHEBI:29108"/>
        <label>4</label>
    </ligand>
</feature>
<feature type="binding site" evidence="1">
    <location>
        <position position="135"/>
    </location>
    <ligand>
        <name>Ca(2+)</name>
        <dbReference type="ChEBI" id="CHEBI:29108"/>
        <label>4</label>
    </ligand>
</feature>
<feature type="binding site" evidence="1">
    <location>
        <position position="140"/>
    </location>
    <ligand>
        <name>Ca(2+)</name>
        <dbReference type="ChEBI" id="CHEBI:29108"/>
        <label>4</label>
    </ligand>
</feature>
<feature type="sequence conflict" description="In Ref. 1; CAA53630." evidence="3" ref="1">
    <original>L</original>
    <variation>I</variation>
    <location>
        <position position="105"/>
    </location>
</feature>
<feature type="helix" evidence="4">
    <location>
        <begin position="7"/>
        <end position="20"/>
    </location>
</feature>
<feature type="strand" evidence="4">
    <location>
        <begin position="26"/>
        <end position="28"/>
    </location>
</feature>
<feature type="helix" evidence="4">
    <location>
        <begin position="29"/>
        <end position="31"/>
    </location>
</feature>
<feature type="helix" evidence="4">
    <location>
        <begin position="32"/>
        <end position="39"/>
    </location>
</feature>
<feature type="helix" evidence="4">
    <location>
        <begin position="45"/>
        <end position="56"/>
    </location>
</feature>
<feature type="strand" evidence="4">
    <location>
        <begin position="62"/>
        <end position="64"/>
    </location>
</feature>
<feature type="helix" evidence="4">
    <location>
        <begin position="65"/>
        <end position="74"/>
    </location>
</feature>
<feature type="turn" evidence="4">
    <location>
        <begin position="75"/>
        <end position="81"/>
    </location>
</feature>
<feature type="helix" evidence="4">
    <location>
        <begin position="82"/>
        <end position="93"/>
    </location>
</feature>
<feature type="strand" evidence="4">
    <location>
        <begin position="97"/>
        <end position="100"/>
    </location>
</feature>
<feature type="helix" evidence="4">
    <location>
        <begin position="102"/>
        <end position="112"/>
    </location>
</feature>
<feature type="helix" evidence="4">
    <location>
        <begin position="118"/>
        <end position="128"/>
    </location>
</feature>
<feature type="strand" evidence="4">
    <location>
        <begin position="134"/>
        <end position="137"/>
    </location>
</feature>
<feature type="helix" evidence="4">
    <location>
        <begin position="138"/>
        <end position="145"/>
    </location>
</feature>
<reference key="1">
    <citation type="journal article" date="1994" name="Biochem. Genet.">
        <title>Drosophila melanogaster genes encoding three troponin-C isoforms and a calmodulin-related protein.</title>
        <authorList>
            <person name="Fyrberg C."/>
            <person name="Parker H."/>
            <person name="Hutchison B."/>
            <person name="Fyrberg E.A."/>
        </authorList>
    </citation>
    <scope>NUCLEOTIDE SEQUENCE [MRNA]</scope>
    <scope>FUNCTION</scope>
</reference>
<reference key="2">
    <citation type="journal article" date="2000" name="Science">
        <title>The genome sequence of Drosophila melanogaster.</title>
        <authorList>
            <person name="Adams M.D."/>
            <person name="Celniker S.E."/>
            <person name="Holt R.A."/>
            <person name="Evans C.A."/>
            <person name="Gocayne J.D."/>
            <person name="Amanatides P.G."/>
            <person name="Scherer S.E."/>
            <person name="Li P.W."/>
            <person name="Hoskins R.A."/>
            <person name="Galle R.F."/>
            <person name="George R.A."/>
            <person name="Lewis S.E."/>
            <person name="Richards S."/>
            <person name="Ashburner M."/>
            <person name="Henderson S.N."/>
            <person name="Sutton G.G."/>
            <person name="Wortman J.R."/>
            <person name="Yandell M.D."/>
            <person name="Zhang Q."/>
            <person name="Chen L.X."/>
            <person name="Brandon R.C."/>
            <person name="Rogers Y.-H.C."/>
            <person name="Blazej R.G."/>
            <person name="Champe M."/>
            <person name="Pfeiffer B.D."/>
            <person name="Wan K.H."/>
            <person name="Doyle C."/>
            <person name="Baxter E.G."/>
            <person name="Helt G."/>
            <person name="Nelson C.R."/>
            <person name="Miklos G.L.G."/>
            <person name="Abril J.F."/>
            <person name="Agbayani A."/>
            <person name="An H.-J."/>
            <person name="Andrews-Pfannkoch C."/>
            <person name="Baldwin D."/>
            <person name="Ballew R.M."/>
            <person name="Basu A."/>
            <person name="Baxendale J."/>
            <person name="Bayraktaroglu L."/>
            <person name="Beasley E.M."/>
            <person name="Beeson K.Y."/>
            <person name="Benos P.V."/>
            <person name="Berman B.P."/>
            <person name="Bhandari D."/>
            <person name="Bolshakov S."/>
            <person name="Borkova D."/>
            <person name="Botchan M.R."/>
            <person name="Bouck J."/>
            <person name="Brokstein P."/>
            <person name="Brottier P."/>
            <person name="Burtis K.C."/>
            <person name="Busam D.A."/>
            <person name="Butler H."/>
            <person name="Cadieu E."/>
            <person name="Center A."/>
            <person name="Chandra I."/>
            <person name="Cherry J.M."/>
            <person name="Cawley S."/>
            <person name="Dahlke C."/>
            <person name="Davenport L.B."/>
            <person name="Davies P."/>
            <person name="de Pablos B."/>
            <person name="Delcher A."/>
            <person name="Deng Z."/>
            <person name="Mays A.D."/>
            <person name="Dew I."/>
            <person name="Dietz S.M."/>
            <person name="Dodson K."/>
            <person name="Doup L.E."/>
            <person name="Downes M."/>
            <person name="Dugan-Rocha S."/>
            <person name="Dunkov B.C."/>
            <person name="Dunn P."/>
            <person name="Durbin K.J."/>
            <person name="Evangelista C.C."/>
            <person name="Ferraz C."/>
            <person name="Ferriera S."/>
            <person name="Fleischmann W."/>
            <person name="Fosler C."/>
            <person name="Gabrielian A.E."/>
            <person name="Garg N.S."/>
            <person name="Gelbart W.M."/>
            <person name="Glasser K."/>
            <person name="Glodek A."/>
            <person name="Gong F."/>
            <person name="Gorrell J.H."/>
            <person name="Gu Z."/>
            <person name="Guan P."/>
            <person name="Harris M."/>
            <person name="Harris N.L."/>
            <person name="Harvey D.A."/>
            <person name="Heiman T.J."/>
            <person name="Hernandez J.R."/>
            <person name="Houck J."/>
            <person name="Hostin D."/>
            <person name="Houston K.A."/>
            <person name="Howland T.J."/>
            <person name="Wei M.-H."/>
            <person name="Ibegwam C."/>
            <person name="Jalali M."/>
            <person name="Kalush F."/>
            <person name="Karpen G.H."/>
            <person name="Ke Z."/>
            <person name="Kennison J.A."/>
            <person name="Ketchum K.A."/>
            <person name="Kimmel B.E."/>
            <person name="Kodira C.D."/>
            <person name="Kraft C.L."/>
            <person name="Kravitz S."/>
            <person name="Kulp D."/>
            <person name="Lai Z."/>
            <person name="Lasko P."/>
            <person name="Lei Y."/>
            <person name="Levitsky A.A."/>
            <person name="Li J.H."/>
            <person name="Li Z."/>
            <person name="Liang Y."/>
            <person name="Lin X."/>
            <person name="Liu X."/>
            <person name="Mattei B."/>
            <person name="McIntosh T.C."/>
            <person name="McLeod M.P."/>
            <person name="McPherson D."/>
            <person name="Merkulov G."/>
            <person name="Milshina N.V."/>
            <person name="Mobarry C."/>
            <person name="Morris J."/>
            <person name="Moshrefi A."/>
            <person name="Mount S.M."/>
            <person name="Moy M."/>
            <person name="Murphy B."/>
            <person name="Murphy L."/>
            <person name="Muzny D.M."/>
            <person name="Nelson D.L."/>
            <person name="Nelson D.R."/>
            <person name="Nelson K.A."/>
            <person name="Nixon K."/>
            <person name="Nusskern D.R."/>
            <person name="Pacleb J.M."/>
            <person name="Palazzolo M."/>
            <person name="Pittman G.S."/>
            <person name="Pan S."/>
            <person name="Pollard J."/>
            <person name="Puri V."/>
            <person name="Reese M.G."/>
            <person name="Reinert K."/>
            <person name="Remington K."/>
            <person name="Saunders R.D.C."/>
            <person name="Scheeler F."/>
            <person name="Shen H."/>
            <person name="Shue B.C."/>
            <person name="Siden-Kiamos I."/>
            <person name="Simpson M."/>
            <person name="Skupski M.P."/>
            <person name="Smith T.J."/>
            <person name="Spier E."/>
            <person name="Spradling A.C."/>
            <person name="Stapleton M."/>
            <person name="Strong R."/>
            <person name="Sun E."/>
            <person name="Svirskas R."/>
            <person name="Tector C."/>
            <person name="Turner R."/>
            <person name="Venter E."/>
            <person name="Wang A.H."/>
            <person name="Wang X."/>
            <person name="Wang Z.-Y."/>
            <person name="Wassarman D.A."/>
            <person name="Weinstock G.M."/>
            <person name="Weissenbach J."/>
            <person name="Williams S.M."/>
            <person name="Woodage T."/>
            <person name="Worley K.C."/>
            <person name="Wu D."/>
            <person name="Yang S."/>
            <person name="Yao Q.A."/>
            <person name="Ye J."/>
            <person name="Yeh R.-F."/>
            <person name="Zaveri J.S."/>
            <person name="Zhan M."/>
            <person name="Zhang G."/>
            <person name="Zhao Q."/>
            <person name="Zheng L."/>
            <person name="Zheng X.H."/>
            <person name="Zhong F.N."/>
            <person name="Zhong W."/>
            <person name="Zhou X."/>
            <person name="Zhu S.C."/>
            <person name="Zhu X."/>
            <person name="Smith H.O."/>
            <person name="Gibbs R.A."/>
            <person name="Myers E.W."/>
            <person name="Rubin G.M."/>
            <person name="Venter J.C."/>
        </authorList>
    </citation>
    <scope>NUCLEOTIDE SEQUENCE [LARGE SCALE GENOMIC DNA]</scope>
    <source>
        <strain>Berkeley</strain>
    </source>
</reference>
<reference key="3">
    <citation type="journal article" date="2002" name="Genome Biol.">
        <title>Annotation of the Drosophila melanogaster euchromatic genome: a systematic review.</title>
        <authorList>
            <person name="Misra S."/>
            <person name="Crosby M.A."/>
            <person name="Mungall C.J."/>
            <person name="Matthews B.B."/>
            <person name="Campbell K.S."/>
            <person name="Hradecky P."/>
            <person name="Huang Y."/>
            <person name="Kaminker J.S."/>
            <person name="Millburn G.H."/>
            <person name="Prochnik S.E."/>
            <person name="Smith C.D."/>
            <person name="Tupy J.L."/>
            <person name="Whitfield E.J."/>
            <person name="Bayraktaroglu L."/>
            <person name="Berman B.P."/>
            <person name="Bettencourt B.R."/>
            <person name="Celniker S.E."/>
            <person name="de Grey A.D.N.J."/>
            <person name="Drysdale R.A."/>
            <person name="Harris N.L."/>
            <person name="Richter J."/>
            <person name="Russo S."/>
            <person name="Schroeder A.J."/>
            <person name="Shu S.Q."/>
            <person name="Stapleton M."/>
            <person name="Yamada C."/>
            <person name="Ashburner M."/>
            <person name="Gelbart W.M."/>
            <person name="Rubin G.M."/>
            <person name="Lewis S.E."/>
        </authorList>
    </citation>
    <scope>GENOME REANNOTATION</scope>
    <source>
        <strain>Berkeley</strain>
    </source>
</reference>
<reference key="4">
    <citation type="journal article" date="2002" name="Genome Biol.">
        <title>A Drosophila full-length cDNA resource.</title>
        <authorList>
            <person name="Stapleton M."/>
            <person name="Carlson J.W."/>
            <person name="Brokstein P."/>
            <person name="Yu C."/>
            <person name="Champe M."/>
            <person name="George R.A."/>
            <person name="Guarin H."/>
            <person name="Kronmiller B."/>
            <person name="Pacleb J.M."/>
            <person name="Park S."/>
            <person name="Wan K.H."/>
            <person name="Rubin G.M."/>
            <person name="Celniker S.E."/>
        </authorList>
    </citation>
    <scope>NUCLEOTIDE SEQUENCE [LARGE SCALE MRNA]</scope>
    <source>
        <strain>Berkeley</strain>
        <tissue>Testis</tissue>
    </source>
</reference>
<sequence>MSELTEEQIAEFKDAFVQFDKEGTGKIATRELGTLMRTLGQNPTEAELQDLIAEAENNNNGQLNFTEFCGIMAKQMRETDTEEEMREAFKIFDRDGDGFISPAELRFVMINLGEKVTDEEIDEMIREADFDGDGMINYEEFVWMISQK</sequence>
<comment type="function">
    <text evidence="2">May be involved in calcium-mediated signal transduction.</text>
</comment>
<comment type="similarity">
    <text evidence="3">Belongs to the calmodulin family.</text>
</comment>
<name>CALL_DROME</name>